<comment type="catalytic activity">
    <reaction evidence="1">
        <text>tRNA(Phe) + L-phenylalanine + ATP = L-phenylalanyl-tRNA(Phe) + AMP + diphosphate + H(+)</text>
        <dbReference type="Rhea" id="RHEA:19413"/>
        <dbReference type="Rhea" id="RHEA-COMP:9668"/>
        <dbReference type="Rhea" id="RHEA-COMP:9699"/>
        <dbReference type="ChEBI" id="CHEBI:15378"/>
        <dbReference type="ChEBI" id="CHEBI:30616"/>
        <dbReference type="ChEBI" id="CHEBI:33019"/>
        <dbReference type="ChEBI" id="CHEBI:58095"/>
        <dbReference type="ChEBI" id="CHEBI:78442"/>
        <dbReference type="ChEBI" id="CHEBI:78531"/>
        <dbReference type="ChEBI" id="CHEBI:456215"/>
        <dbReference type="EC" id="6.1.1.20"/>
    </reaction>
</comment>
<comment type="cofactor">
    <cofactor evidence="1">
        <name>Mg(2+)</name>
        <dbReference type="ChEBI" id="CHEBI:18420"/>
    </cofactor>
    <text evidence="1">Binds 2 magnesium ions per tetramer.</text>
</comment>
<comment type="subunit">
    <text evidence="1">Tetramer of two alpha and two beta subunits.</text>
</comment>
<comment type="subcellular location">
    <subcellularLocation>
        <location evidence="1">Cytoplasm</location>
    </subcellularLocation>
</comment>
<comment type="similarity">
    <text evidence="1">Belongs to the class-II aminoacyl-tRNA synthetase family. Phe-tRNA synthetase alpha subunit type 1 subfamily.</text>
</comment>
<accession>B5EBY3</accession>
<organism>
    <name type="scientific">Citrifermentans bemidjiense (strain ATCC BAA-1014 / DSM 16622 / JCM 12645 / Bem)</name>
    <name type="common">Geobacter bemidjiensis</name>
    <dbReference type="NCBI Taxonomy" id="404380"/>
    <lineage>
        <taxon>Bacteria</taxon>
        <taxon>Pseudomonadati</taxon>
        <taxon>Thermodesulfobacteriota</taxon>
        <taxon>Desulfuromonadia</taxon>
        <taxon>Geobacterales</taxon>
        <taxon>Geobacteraceae</taxon>
        <taxon>Citrifermentans</taxon>
    </lineage>
</organism>
<sequence length="338" mass="37592">MKDKLEALLDQALSELAQASTEEGVQELRVKYLGKKGELTSVMKGLGALTPEERPVIGQVVNTVKSKLEEAFEVRGGEIREVVKSARLSAERIDVTLPGRRRPLGSKHPITLVTEEITSIFGALGFAVAEGPEIELDFYNFEALNLPKDHPARDMQDTFYFGESVLLRTHTSPVQIRTMLKQPPPVRIIAPGTVYRCDSDATHSPMFHQVEGLMVDKGITFGDLKGILTLFISQLFGSDIGVRLRPSFFPFTEPSAEVDIACVICRGKGCRVCKETGWLEILGAGMVDPEVYRHVGYDSELYTGFAFGMGIERIAMLKYGIADMRLLFENDLRFLKQF</sequence>
<name>SYFA_CITBB</name>
<reference key="1">
    <citation type="submission" date="2008-07" db="EMBL/GenBank/DDBJ databases">
        <title>Complete sequence of Geobacter bemidjiensis BEM.</title>
        <authorList>
            <consortium name="US DOE Joint Genome Institute"/>
            <person name="Lucas S."/>
            <person name="Copeland A."/>
            <person name="Lapidus A."/>
            <person name="Glavina del Rio T."/>
            <person name="Dalin E."/>
            <person name="Tice H."/>
            <person name="Bruce D."/>
            <person name="Goodwin L."/>
            <person name="Pitluck S."/>
            <person name="Kiss H."/>
            <person name="Brettin T."/>
            <person name="Detter J.C."/>
            <person name="Han C."/>
            <person name="Kuske C.R."/>
            <person name="Schmutz J."/>
            <person name="Larimer F."/>
            <person name="Land M."/>
            <person name="Hauser L."/>
            <person name="Kyrpides N."/>
            <person name="Lykidis A."/>
            <person name="Lovley D."/>
            <person name="Richardson P."/>
        </authorList>
    </citation>
    <scope>NUCLEOTIDE SEQUENCE [LARGE SCALE GENOMIC DNA]</scope>
    <source>
        <strain>ATCC BAA-1014 / DSM 16622 / JCM 12645 / Bem</strain>
    </source>
</reference>
<feature type="chain" id="PRO_1000114876" description="Phenylalanine--tRNA ligase alpha subunit">
    <location>
        <begin position="1"/>
        <end position="338"/>
    </location>
</feature>
<feature type="binding site" evidence="1">
    <location>
        <position position="253"/>
    </location>
    <ligand>
        <name>Mg(2+)</name>
        <dbReference type="ChEBI" id="CHEBI:18420"/>
        <note>shared with beta subunit</note>
    </ligand>
</feature>
<dbReference type="EC" id="6.1.1.20" evidence="1"/>
<dbReference type="EMBL" id="CP001124">
    <property type="protein sequence ID" value="ACH39007.1"/>
    <property type="molecule type" value="Genomic_DNA"/>
</dbReference>
<dbReference type="RefSeq" id="WP_012530426.1">
    <property type="nucleotide sequence ID" value="NC_011146.1"/>
</dbReference>
<dbReference type="SMR" id="B5EBY3"/>
<dbReference type="STRING" id="404380.Gbem_1994"/>
<dbReference type="KEGG" id="gbm:Gbem_1994"/>
<dbReference type="eggNOG" id="COG0016">
    <property type="taxonomic scope" value="Bacteria"/>
</dbReference>
<dbReference type="HOGENOM" id="CLU_025086_0_1_7"/>
<dbReference type="OrthoDB" id="9800719at2"/>
<dbReference type="Proteomes" id="UP000008825">
    <property type="component" value="Chromosome"/>
</dbReference>
<dbReference type="GO" id="GO:0005737">
    <property type="term" value="C:cytoplasm"/>
    <property type="evidence" value="ECO:0007669"/>
    <property type="project" value="UniProtKB-SubCell"/>
</dbReference>
<dbReference type="GO" id="GO:0005524">
    <property type="term" value="F:ATP binding"/>
    <property type="evidence" value="ECO:0007669"/>
    <property type="project" value="UniProtKB-UniRule"/>
</dbReference>
<dbReference type="GO" id="GO:0000287">
    <property type="term" value="F:magnesium ion binding"/>
    <property type="evidence" value="ECO:0007669"/>
    <property type="project" value="UniProtKB-UniRule"/>
</dbReference>
<dbReference type="GO" id="GO:0004826">
    <property type="term" value="F:phenylalanine-tRNA ligase activity"/>
    <property type="evidence" value="ECO:0007669"/>
    <property type="project" value="UniProtKB-UniRule"/>
</dbReference>
<dbReference type="GO" id="GO:0000049">
    <property type="term" value="F:tRNA binding"/>
    <property type="evidence" value="ECO:0007669"/>
    <property type="project" value="InterPro"/>
</dbReference>
<dbReference type="GO" id="GO:0006432">
    <property type="term" value="P:phenylalanyl-tRNA aminoacylation"/>
    <property type="evidence" value="ECO:0007669"/>
    <property type="project" value="UniProtKB-UniRule"/>
</dbReference>
<dbReference type="CDD" id="cd00496">
    <property type="entry name" value="PheRS_alpha_core"/>
    <property type="match status" value="1"/>
</dbReference>
<dbReference type="FunFam" id="3.30.930.10:FF:000003">
    <property type="entry name" value="Phenylalanine--tRNA ligase alpha subunit"/>
    <property type="match status" value="1"/>
</dbReference>
<dbReference type="Gene3D" id="3.30.930.10">
    <property type="entry name" value="Bira Bifunctional Protein, Domain 2"/>
    <property type="match status" value="1"/>
</dbReference>
<dbReference type="HAMAP" id="MF_00281">
    <property type="entry name" value="Phe_tRNA_synth_alpha1"/>
    <property type="match status" value="1"/>
</dbReference>
<dbReference type="InterPro" id="IPR006195">
    <property type="entry name" value="aa-tRNA-synth_II"/>
</dbReference>
<dbReference type="InterPro" id="IPR045864">
    <property type="entry name" value="aa-tRNA-synth_II/BPL/LPL"/>
</dbReference>
<dbReference type="InterPro" id="IPR004529">
    <property type="entry name" value="Phe-tRNA-synth_IIc_asu"/>
</dbReference>
<dbReference type="InterPro" id="IPR004188">
    <property type="entry name" value="Phe-tRNA_ligase_II_N"/>
</dbReference>
<dbReference type="InterPro" id="IPR022911">
    <property type="entry name" value="Phe_tRNA_ligase_alpha1_bac"/>
</dbReference>
<dbReference type="InterPro" id="IPR002319">
    <property type="entry name" value="Phenylalanyl-tRNA_Synthase"/>
</dbReference>
<dbReference type="InterPro" id="IPR010978">
    <property type="entry name" value="tRNA-bd_arm"/>
</dbReference>
<dbReference type="NCBIfam" id="TIGR00468">
    <property type="entry name" value="pheS"/>
    <property type="match status" value="1"/>
</dbReference>
<dbReference type="PANTHER" id="PTHR11538:SF41">
    <property type="entry name" value="PHENYLALANINE--TRNA LIGASE, MITOCHONDRIAL"/>
    <property type="match status" value="1"/>
</dbReference>
<dbReference type="PANTHER" id="PTHR11538">
    <property type="entry name" value="PHENYLALANYL-TRNA SYNTHETASE"/>
    <property type="match status" value="1"/>
</dbReference>
<dbReference type="Pfam" id="PF02912">
    <property type="entry name" value="Phe_tRNA-synt_N"/>
    <property type="match status" value="1"/>
</dbReference>
<dbReference type="Pfam" id="PF01409">
    <property type="entry name" value="tRNA-synt_2d"/>
    <property type="match status" value="1"/>
</dbReference>
<dbReference type="SUPFAM" id="SSF55681">
    <property type="entry name" value="Class II aaRS and biotin synthetases"/>
    <property type="match status" value="1"/>
</dbReference>
<dbReference type="SUPFAM" id="SSF46589">
    <property type="entry name" value="tRNA-binding arm"/>
    <property type="match status" value="1"/>
</dbReference>
<dbReference type="PROSITE" id="PS50862">
    <property type="entry name" value="AA_TRNA_LIGASE_II"/>
    <property type="match status" value="1"/>
</dbReference>
<proteinExistence type="inferred from homology"/>
<keyword id="KW-0030">Aminoacyl-tRNA synthetase</keyword>
<keyword id="KW-0067">ATP-binding</keyword>
<keyword id="KW-0963">Cytoplasm</keyword>
<keyword id="KW-0436">Ligase</keyword>
<keyword id="KW-0460">Magnesium</keyword>
<keyword id="KW-0479">Metal-binding</keyword>
<keyword id="KW-0547">Nucleotide-binding</keyword>
<keyword id="KW-0648">Protein biosynthesis</keyword>
<keyword id="KW-1185">Reference proteome</keyword>
<gene>
    <name evidence="1" type="primary">pheS</name>
    <name type="ordered locus">Gbem_1994</name>
</gene>
<evidence type="ECO:0000255" key="1">
    <source>
        <dbReference type="HAMAP-Rule" id="MF_00281"/>
    </source>
</evidence>
<protein>
    <recommendedName>
        <fullName evidence="1">Phenylalanine--tRNA ligase alpha subunit</fullName>
        <ecNumber evidence="1">6.1.1.20</ecNumber>
    </recommendedName>
    <alternativeName>
        <fullName evidence="1">Phenylalanyl-tRNA synthetase alpha subunit</fullName>
        <shortName evidence="1">PheRS</shortName>
    </alternativeName>
</protein>